<keyword id="KW-0002">3D-structure</keyword>
<keyword id="KW-1283">Bacterial microcompartment</keyword>
<keyword id="KW-0120">Carbon dioxide fixation</keyword>
<keyword id="KW-1282">Carboxysome</keyword>
<keyword id="KW-0602">Photosynthesis</keyword>
<keyword id="KW-0677">Repeat</keyword>
<gene>
    <name evidence="5" type="primary">csoS2</name>
    <name type="ordered locus">PMM0552</name>
</gene>
<organism>
    <name type="scientific">Prochlorococcus marinus subsp. pastoris (strain CCMP1986 / NIES-2087 / MED4)</name>
    <dbReference type="NCBI Taxonomy" id="59919"/>
    <lineage>
        <taxon>Bacteria</taxon>
        <taxon>Bacillati</taxon>
        <taxon>Cyanobacteriota</taxon>
        <taxon>Cyanophyceae</taxon>
        <taxon>Synechococcales</taxon>
        <taxon>Prochlorococcaceae</taxon>
        <taxon>Prochlorococcus</taxon>
    </lineage>
</organism>
<protein>
    <recommendedName>
        <fullName evidence="6">Carboxysome assembly protein CsoS2</fullName>
    </recommendedName>
    <alternativeName>
        <fullName evidence="5">Carboxysome shell protein CsoS2</fullName>
    </alternativeName>
</protein>
<sequence>MSTKTSREIALERRKAMSDGGKKAALHSSSTKDRVRSSQDINSTGATSSNKKVLTSPSKSNIPANKIARKSTSSKLSSKELGIERRKAMSTHGKSAINSSDRTRTDVKSDIKVNKVISTEKPQALKDHNNNIKDNQVVKQNIKRRINQKRKPITNTSRDIVLARREAQSKHGKSASKQNTSAASLARRGDPDLSSREISQRVRELRSKTGSTSKQGNGKCRPCGPNKNGSKLNIADASWKVGKSETDSGQTVTGTQANRSLKTTGNEASTCRTVTGTQYMGAEVTGQFCQDKPKYKQPIRASVTTTTSGNKVTGNEVGRSEKVTGDEPGTCKNLTGTEYISANQSKKYCGEVIKKPSKVMQSITTDGLKVSGSLPGRSSLVTGDESGSGKQLTGDQYLGSEPSPKGKSFEKVGSYDTLNGNNVTGTGVGRSDYVTGNEYGSCKNLTGDEYIGSQQYEKFCGSTPKPEARKVGLSLSSKSNLISGTMTGRSKIVTGDEPGSCKVLTGTPYAGLDQINDNCNAEIADDMKSRATVNSGNNSNARLTGLQPGIGGVMTGATKGSCKNLTGTPYIGGDQFLSNCETPPNDASYANQEKSASNSWKEFSVNSPSREKYSAKNTEGVTGNRYEDSSKITGPFDMAEDKVTGTEQFRFEPNKNMTYKQKMKQEESQNIDIPTDKKEPSKITGEGQSAGNITGDDWDRGDKVTGTEGVSARKRNPSRAGFMGAMPPVDNKRNDETEKPDFLITGSSGNTRDGQLVTFSGGARG</sequence>
<name>CSOS2_PROMP</name>
<evidence type="ECO:0000250" key="1">
    <source>
        <dbReference type="UniProtKB" id="O85041"/>
    </source>
</evidence>
<evidence type="ECO:0000256" key="2">
    <source>
        <dbReference type="SAM" id="MobiDB-lite"/>
    </source>
</evidence>
<evidence type="ECO:0000269" key="3">
    <source>
    </source>
</evidence>
<evidence type="ECO:0000269" key="4">
    <source>
    </source>
</evidence>
<evidence type="ECO:0000303" key="5">
    <source>
    </source>
</evidence>
<evidence type="ECO:0000305" key="6"/>
<evidence type="ECO:0000305" key="7">
    <source>
    </source>
</evidence>
<evidence type="ECO:0000305" key="8">
    <source>
    </source>
</evidence>
<reference key="1">
    <citation type="journal article" date="2003" name="Nature">
        <title>Genome divergence in two Prochlorococcus ecotypes reflects oceanic niche differentiation.</title>
        <authorList>
            <person name="Rocap G."/>
            <person name="Larimer F.W."/>
            <person name="Lamerdin J.E."/>
            <person name="Malfatti S."/>
            <person name="Chain P."/>
            <person name="Ahlgren N.A."/>
            <person name="Arellano A."/>
            <person name="Coleman M."/>
            <person name="Hauser L."/>
            <person name="Hess W.R."/>
            <person name="Johnson Z.I."/>
            <person name="Land M.L."/>
            <person name="Lindell D."/>
            <person name="Post A.F."/>
            <person name="Regala W."/>
            <person name="Shah M."/>
            <person name="Shaw S.L."/>
            <person name="Steglich C."/>
            <person name="Sullivan M.B."/>
            <person name="Ting C.S."/>
            <person name="Tolonen A."/>
            <person name="Webb E.A."/>
            <person name="Zinser E.R."/>
            <person name="Chisholm S.W."/>
        </authorList>
    </citation>
    <scope>NUCLEOTIDE SEQUENCE [LARGE SCALE GENOMIC DNA]</scope>
    <source>
        <strain>CCMP1986 / NIES-2087 / MED4</strain>
    </source>
</reference>
<reference key="2">
    <citation type="journal article" date="2012" name="J. Bacteriol.">
        <title>Isolation and characterization of the Prochlorococcus carboxysome reveal the presence of the novel shell protein CsoS1D.</title>
        <authorList>
            <person name="Roberts E.W."/>
            <person name="Cai F."/>
            <person name="Kerfeld C.A."/>
            <person name="Cannon G.C."/>
            <person name="Heinhorst S."/>
        </authorList>
    </citation>
    <scope>PROTEIN ABUNDANCE</scope>
    <scope>SUBCELLULAR LOCATION</scope>
    <source>
        <strain>CCMP1986 / NIES-2087 / MED4</strain>
    </source>
</reference>
<reference key="3">
    <citation type="journal article" date="2015" name="Life">
        <title>Advances in Understanding Carboxysome Assembly in Prochlorococcus and Synechococcus Implicate CsoS2 as a Critical Component.</title>
        <authorList>
            <person name="Cai F."/>
            <person name="Dou Z."/>
            <person name="Bernstein S.L."/>
            <person name="Leverenz R."/>
            <person name="Williams E.B."/>
            <person name="Heinhorst S."/>
            <person name="Shively J."/>
            <person name="Cannon G.C."/>
            <person name="Kerfeld C.A."/>
        </authorList>
    </citation>
    <scope>FUNCTION</scope>
    <scope>SUBUNIT</scope>
    <scope>DOMAIN</scope>
    <source>
        <strain>CCMP1986 / NIES-2087 / MED4</strain>
    </source>
</reference>
<reference key="4">
    <citation type="journal article" date="2016" name="J. Mol. Biol.">
        <title>Programmed Ribosomal Frameshifting Mediates Expression of the alpha-Carboxysome.</title>
        <authorList>
            <person name="Chaijarasphong T."/>
            <person name="Nichols R.J."/>
            <person name="Kortright K.E."/>
            <person name="Nixon C.F."/>
            <person name="Teng P.K."/>
            <person name="Oltrogge L.M."/>
            <person name="Savage D.F."/>
        </authorList>
    </citation>
    <scope>PROBABLY NO RIBOSOMAL FRAMESHIFT</scope>
</reference>
<proteinExistence type="evidence at protein level"/>
<comment type="function">
    <text evidence="1 3 7">Required for alpha-carboxysome (Cb) assembly, mediates interaction between RuBisCO and the Cb shell. The protein is probably highly flexible (Probable). The C-terminal repeats act as the encapsulation signal to target proteins to the Cb; they are necessary and sufficient to target both CsoS2 and foreign proteins to the Cb. The N-terminal repeats of this protein bind simultaneously to both subunits of RuBisCO. Probably also interacts with the major shell proteins (CsoS1); that interaction would increase the local concentration of CsoS2 so that it can condense RuBisCO and full carboxysomes can be formed (By similarity). There are estimated to be 163 CsoS2 proteins per carboxysome; unlike H.neapolitanus only 1 form is seen (PubMed:22155772).</text>
</comment>
<comment type="subunit">
    <text evidence="1 4 7">Probably interacts with the carboxysome major shell protein CsoS1 via the N-terminal domain (Probable). A CsoS1-CsoS1D-CsoS2 complex can be isolated following expression in E.coli (PubMed:25826651). Interacts via its N-terminal repeats with RuBisCO (By similarity).</text>
</comment>
<comment type="subcellular location">
    <subcellularLocation>
        <location evidence="3">Carboxysome</location>
    </subcellularLocation>
    <text evidence="4">This bacterium makes alpha-type carboxysomes.</text>
</comment>
<comment type="domain">
    <text evidence="1 7">Has 3 domains; the N-terminal domain has 4 short repeats, the central region has 6 longer repeats (Probable). The C-terminal domain has 2 repeats and a highly conserved C-terminal peptide. The C-repeats serve as the encapsulation signal for the alpha-carboxysome, and are able to target foreign proteins to this organelle (By similarity).</text>
</comment>
<comment type="PTM">
    <text evidence="6 8">Unlike H.neapolitanus and predictions for P.marinus strain MIT 9313, this protein is not thought to have ribosomal frameshifting.</text>
</comment>
<comment type="similarity">
    <text evidence="6">Belongs to the CsoS2 family.</text>
</comment>
<dbReference type="EMBL" id="BX548174">
    <property type="protein sequence ID" value="CAE19011.1"/>
    <property type="molecule type" value="Genomic_DNA"/>
</dbReference>
<dbReference type="RefSeq" id="WP_011132186.1">
    <property type="nucleotide sequence ID" value="NC_005072.1"/>
</dbReference>
<dbReference type="PDB" id="8WXB">
    <property type="method" value="EM"/>
    <property type="resolution" value="4.20 A"/>
    <property type="chains" value="Y/Z=1-765"/>
</dbReference>
<dbReference type="PDBsum" id="8WXB"/>
<dbReference type="EMDB" id="EMD-37902"/>
<dbReference type="SMR" id="Q7V2C8"/>
<dbReference type="STRING" id="59919.PMM0552"/>
<dbReference type="KEGG" id="pmm:PMM0552"/>
<dbReference type="eggNOG" id="ENOG502Z8T4">
    <property type="taxonomic scope" value="Bacteria"/>
</dbReference>
<dbReference type="HOGENOM" id="CLU_016451_1_0_3"/>
<dbReference type="OrthoDB" id="543713at2"/>
<dbReference type="Proteomes" id="UP000001026">
    <property type="component" value="Chromosome"/>
</dbReference>
<dbReference type="GO" id="GO:0031470">
    <property type="term" value="C:carboxysome"/>
    <property type="evidence" value="ECO:0007669"/>
    <property type="project" value="UniProtKB-SubCell"/>
</dbReference>
<dbReference type="GO" id="GO:0043886">
    <property type="term" value="F:structural constituent of carboxysome shell"/>
    <property type="evidence" value="ECO:0007669"/>
    <property type="project" value="InterPro"/>
</dbReference>
<dbReference type="GO" id="GO:0015977">
    <property type="term" value="P:carbon fixation"/>
    <property type="evidence" value="ECO:0007669"/>
    <property type="project" value="UniProtKB-KW"/>
</dbReference>
<dbReference type="GO" id="GO:0015979">
    <property type="term" value="P:photosynthesis"/>
    <property type="evidence" value="ECO:0007669"/>
    <property type="project" value="UniProtKB-KW"/>
</dbReference>
<dbReference type="InterPro" id="IPR020990">
    <property type="entry name" value="CSOS2/2B"/>
</dbReference>
<dbReference type="Pfam" id="PF12288">
    <property type="entry name" value="CsoS2_M"/>
    <property type="match status" value="1"/>
</dbReference>
<accession>Q7V2C8</accession>
<feature type="chain" id="PRO_0000452070" description="Carboxysome assembly protein CsoS2">
    <location>
        <begin position="1"/>
        <end position="765"/>
    </location>
</feature>
<feature type="repeat" description="N-repeat 1" evidence="4">
    <location>
        <begin position="7"/>
        <end position="22"/>
    </location>
</feature>
<feature type="repeat" description="N-repeat 2" evidence="4">
    <location>
        <begin position="79"/>
        <end position="94"/>
    </location>
</feature>
<feature type="repeat" description="N-repeat 3" evidence="4">
    <location>
        <begin position="158"/>
        <end position="173"/>
    </location>
</feature>
<feature type="repeat" description="N-repeat 4" evidence="4">
    <location>
        <begin position="196"/>
        <end position="211"/>
    </location>
</feature>
<feature type="repeat" description="M-repeat 1" evidence="4">
    <location>
        <begin position="240"/>
        <end position="289"/>
    </location>
</feature>
<feature type="repeat" description="M-repeat 2" evidence="4">
    <location>
        <begin position="300"/>
        <end position="349"/>
    </location>
</feature>
<feature type="repeat" description="M-repeat 3" evidence="4">
    <location>
        <begin position="358"/>
        <end position="397"/>
    </location>
</feature>
<feature type="repeat" description="M-repeat 4" evidence="4">
    <location>
        <begin position="411"/>
        <end position="460"/>
    </location>
</feature>
<feature type="repeat" description="M-repeat 5" evidence="4">
    <location>
        <begin position="470"/>
        <end position="519"/>
    </location>
</feature>
<feature type="repeat" description="M-repeat 6" evidence="4">
    <location>
        <begin position="530"/>
        <end position="580"/>
    </location>
</feature>
<feature type="repeat" description="C-repeat 1" evidence="1">
    <location>
        <begin position="604"/>
        <end position="648"/>
    </location>
</feature>
<feature type="repeat" description="C-repeat 2" evidence="1">
    <location>
        <begin position="677"/>
        <end position="711"/>
    </location>
</feature>
<feature type="region of interest" description="N-terminal domain" evidence="7">
    <location>
        <begin position="1"/>
        <end position="215"/>
    </location>
</feature>
<feature type="region of interest" description="Disordered" evidence="2">
    <location>
        <begin position="1"/>
        <end position="107"/>
    </location>
</feature>
<feature type="region of interest" description="Disordered" evidence="2">
    <location>
        <begin position="165"/>
        <end position="229"/>
    </location>
</feature>
<feature type="region of interest" description="Middle region" evidence="7">
    <location>
        <begin position="216"/>
        <end position="586"/>
    </location>
</feature>
<feature type="region of interest" description="Disordered" evidence="2">
    <location>
        <begin position="306"/>
        <end position="328"/>
    </location>
</feature>
<feature type="region of interest" description="Disordered" evidence="2">
    <location>
        <begin position="367"/>
        <end position="413"/>
    </location>
</feature>
<feature type="region of interest" description="C-terminal domain" evidence="7">
    <location>
        <begin position="589"/>
        <end position="734"/>
    </location>
</feature>
<feature type="region of interest" description="Disordered" evidence="2">
    <location>
        <begin position="611"/>
        <end position="637"/>
    </location>
</feature>
<feature type="region of interest" description="Disordered" evidence="2">
    <location>
        <begin position="656"/>
        <end position="765"/>
    </location>
</feature>
<feature type="region of interest" description="C-terminal peptide" evidence="1">
    <location>
        <begin position="735"/>
        <end position="765"/>
    </location>
</feature>
<feature type="compositionally biased region" description="Basic and acidic residues" evidence="2">
    <location>
        <begin position="1"/>
        <end position="22"/>
    </location>
</feature>
<feature type="compositionally biased region" description="Polar residues" evidence="2">
    <location>
        <begin position="38"/>
        <end position="63"/>
    </location>
</feature>
<feature type="compositionally biased region" description="Basic and acidic residues" evidence="2">
    <location>
        <begin position="77"/>
        <end position="87"/>
    </location>
</feature>
<feature type="compositionally biased region" description="Basic and acidic residues" evidence="2">
    <location>
        <begin position="187"/>
        <end position="207"/>
    </location>
</feature>
<feature type="compositionally biased region" description="Basic and acidic residues" evidence="2">
    <location>
        <begin position="730"/>
        <end position="741"/>
    </location>
</feature>